<gene>
    <name evidence="7" type="primary">HUB1</name>
    <name evidence="8" type="synonym">BRE1A</name>
    <name evidence="9" type="ordered locus">Os04g0550400</name>
    <name evidence="8" type="ordered locus">LOC_Os04g46450</name>
    <name evidence="11" type="ORF">OsJ_15692</name>
    <name evidence="10" type="ORF">OSJNBb0034G17.7</name>
</gene>
<feature type="chain" id="PRO_0000293110" description="E3 ubiquitin-protein ligase BRE1-like 1">
    <location>
        <begin position="1"/>
        <end position="884"/>
    </location>
</feature>
<feature type="zinc finger region" description="RING-type" evidence="3">
    <location>
        <begin position="832"/>
        <end position="871"/>
    </location>
</feature>
<feature type="region of interest" description="Disordered" evidence="4">
    <location>
        <begin position="1"/>
        <end position="37"/>
    </location>
</feature>
<feature type="region of interest" description="Disordered" evidence="4">
    <location>
        <begin position="107"/>
        <end position="127"/>
    </location>
</feature>
<feature type="coiled-coil region" evidence="2">
    <location>
        <begin position="49"/>
        <end position="86"/>
    </location>
</feature>
<feature type="coiled-coil region" evidence="2">
    <location>
        <begin position="216"/>
        <end position="541"/>
    </location>
</feature>
<feature type="coiled-coil region" evidence="2">
    <location>
        <begin position="580"/>
        <end position="663"/>
    </location>
</feature>
<feature type="coiled-coil region" evidence="2">
    <location>
        <begin position="696"/>
        <end position="762"/>
    </location>
</feature>
<feature type="coiled-coil region" evidence="2">
    <location>
        <begin position="789"/>
        <end position="827"/>
    </location>
</feature>
<feature type="compositionally biased region" description="Low complexity" evidence="4">
    <location>
        <begin position="108"/>
        <end position="121"/>
    </location>
</feature>
<proteinExistence type="evidence at protein level"/>
<protein>
    <recommendedName>
        <fullName evidence="8">E3 ubiquitin-protein ligase BRE1-like 1</fullName>
        <ecNumber evidence="6">2.3.2.27</ecNumber>
    </recommendedName>
    <alternativeName>
        <fullName evidence="7">Protein HISTONE MONOUBIQUITINATION 1</fullName>
        <shortName evidence="7">OsHUB1</shortName>
    </alternativeName>
    <alternativeName>
        <fullName evidence="8">RING-type E3 ubiquitin transferase BRE1-like 1</fullName>
    </alternativeName>
</protein>
<reference key="1">
    <citation type="journal article" date="2002" name="Nature">
        <title>Sequence and analysis of rice chromosome 4.</title>
        <authorList>
            <person name="Feng Q."/>
            <person name="Zhang Y."/>
            <person name="Hao P."/>
            <person name="Wang S."/>
            <person name="Fu G."/>
            <person name="Huang Y."/>
            <person name="Li Y."/>
            <person name="Zhu J."/>
            <person name="Liu Y."/>
            <person name="Hu X."/>
            <person name="Jia P."/>
            <person name="Zhang Y."/>
            <person name="Zhao Q."/>
            <person name="Ying K."/>
            <person name="Yu S."/>
            <person name="Tang Y."/>
            <person name="Weng Q."/>
            <person name="Zhang L."/>
            <person name="Lu Y."/>
            <person name="Mu J."/>
            <person name="Lu Y."/>
            <person name="Zhang L.S."/>
            <person name="Yu Z."/>
            <person name="Fan D."/>
            <person name="Liu X."/>
            <person name="Lu T."/>
            <person name="Li C."/>
            <person name="Wu Y."/>
            <person name="Sun T."/>
            <person name="Lei H."/>
            <person name="Li T."/>
            <person name="Hu H."/>
            <person name="Guan J."/>
            <person name="Wu M."/>
            <person name="Zhang R."/>
            <person name="Zhou B."/>
            <person name="Chen Z."/>
            <person name="Chen L."/>
            <person name="Jin Z."/>
            <person name="Wang R."/>
            <person name="Yin H."/>
            <person name="Cai Z."/>
            <person name="Ren S."/>
            <person name="Lv G."/>
            <person name="Gu W."/>
            <person name="Zhu G."/>
            <person name="Tu Y."/>
            <person name="Jia J."/>
            <person name="Zhang Y."/>
            <person name="Chen J."/>
            <person name="Kang H."/>
            <person name="Chen X."/>
            <person name="Shao C."/>
            <person name="Sun Y."/>
            <person name="Hu Q."/>
            <person name="Zhang X."/>
            <person name="Zhang W."/>
            <person name="Wang L."/>
            <person name="Ding C."/>
            <person name="Sheng H."/>
            <person name="Gu J."/>
            <person name="Chen S."/>
            <person name="Ni L."/>
            <person name="Zhu F."/>
            <person name="Chen W."/>
            <person name="Lan L."/>
            <person name="Lai Y."/>
            <person name="Cheng Z."/>
            <person name="Gu M."/>
            <person name="Jiang J."/>
            <person name="Li J."/>
            <person name="Hong G."/>
            <person name="Xue Y."/>
            <person name="Han B."/>
        </authorList>
    </citation>
    <scope>NUCLEOTIDE SEQUENCE [LARGE SCALE GENOMIC DNA]</scope>
    <source>
        <strain>cv. Nipponbare</strain>
    </source>
</reference>
<reference key="2">
    <citation type="journal article" date="2005" name="Nature">
        <title>The map-based sequence of the rice genome.</title>
        <authorList>
            <consortium name="International rice genome sequencing project (IRGSP)"/>
        </authorList>
    </citation>
    <scope>NUCLEOTIDE SEQUENCE [LARGE SCALE GENOMIC DNA]</scope>
    <source>
        <strain>cv. Nipponbare</strain>
    </source>
</reference>
<reference key="3">
    <citation type="journal article" date="2008" name="Nucleic Acids Res.">
        <title>The rice annotation project database (RAP-DB): 2008 update.</title>
        <authorList>
            <consortium name="The rice annotation project (RAP)"/>
        </authorList>
    </citation>
    <scope>GENOME REANNOTATION</scope>
    <source>
        <strain>cv. Nipponbare</strain>
    </source>
</reference>
<reference key="4">
    <citation type="journal article" date="2013" name="Rice">
        <title>Improvement of the Oryza sativa Nipponbare reference genome using next generation sequence and optical map data.</title>
        <authorList>
            <person name="Kawahara Y."/>
            <person name="de la Bastide M."/>
            <person name="Hamilton J.P."/>
            <person name="Kanamori H."/>
            <person name="McCombie W.R."/>
            <person name="Ouyang S."/>
            <person name="Schwartz D.C."/>
            <person name="Tanaka T."/>
            <person name="Wu J."/>
            <person name="Zhou S."/>
            <person name="Childs K.L."/>
            <person name="Davidson R.M."/>
            <person name="Lin H."/>
            <person name="Quesada-Ocampo L."/>
            <person name="Vaillancourt B."/>
            <person name="Sakai H."/>
            <person name="Lee S.S."/>
            <person name="Kim J."/>
            <person name="Numa H."/>
            <person name="Itoh T."/>
            <person name="Buell C.R."/>
            <person name="Matsumoto T."/>
        </authorList>
    </citation>
    <scope>GENOME REANNOTATION</scope>
    <source>
        <strain>cv. Nipponbare</strain>
    </source>
</reference>
<reference key="5">
    <citation type="journal article" date="2005" name="PLoS Biol.">
        <title>The genomes of Oryza sativa: a history of duplications.</title>
        <authorList>
            <person name="Yu J."/>
            <person name="Wang J."/>
            <person name="Lin W."/>
            <person name="Li S."/>
            <person name="Li H."/>
            <person name="Zhou J."/>
            <person name="Ni P."/>
            <person name="Dong W."/>
            <person name="Hu S."/>
            <person name="Zeng C."/>
            <person name="Zhang J."/>
            <person name="Zhang Y."/>
            <person name="Li R."/>
            <person name="Xu Z."/>
            <person name="Li S."/>
            <person name="Li X."/>
            <person name="Zheng H."/>
            <person name="Cong L."/>
            <person name="Lin L."/>
            <person name="Yin J."/>
            <person name="Geng J."/>
            <person name="Li G."/>
            <person name="Shi J."/>
            <person name="Liu J."/>
            <person name="Lv H."/>
            <person name="Li J."/>
            <person name="Wang J."/>
            <person name="Deng Y."/>
            <person name="Ran L."/>
            <person name="Shi X."/>
            <person name="Wang X."/>
            <person name="Wu Q."/>
            <person name="Li C."/>
            <person name="Ren X."/>
            <person name="Wang J."/>
            <person name="Wang X."/>
            <person name="Li D."/>
            <person name="Liu D."/>
            <person name="Zhang X."/>
            <person name="Ji Z."/>
            <person name="Zhao W."/>
            <person name="Sun Y."/>
            <person name="Zhang Z."/>
            <person name="Bao J."/>
            <person name="Han Y."/>
            <person name="Dong L."/>
            <person name="Ji J."/>
            <person name="Chen P."/>
            <person name="Wu S."/>
            <person name="Liu J."/>
            <person name="Xiao Y."/>
            <person name="Bu D."/>
            <person name="Tan J."/>
            <person name="Yang L."/>
            <person name="Ye C."/>
            <person name="Zhang J."/>
            <person name="Xu J."/>
            <person name="Zhou Y."/>
            <person name="Yu Y."/>
            <person name="Zhang B."/>
            <person name="Zhuang S."/>
            <person name="Wei H."/>
            <person name="Liu B."/>
            <person name="Lei M."/>
            <person name="Yu H."/>
            <person name="Li Y."/>
            <person name="Xu H."/>
            <person name="Wei S."/>
            <person name="He X."/>
            <person name="Fang L."/>
            <person name="Zhang Z."/>
            <person name="Zhang Y."/>
            <person name="Huang X."/>
            <person name="Su Z."/>
            <person name="Tong W."/>
            <person name="Li J."/>
            <person name="Tong Z."/>
            <person name="Li S."/>
            <person name="Ye J."/>
            <person name="Wang L."/>
            <person name="Fang L."/>
            <person name="Lei T."/>
            <person name="Chen C.-S."/>
            <person name="Chen H.-C."/>
            <person name="Xu Z."/>
            <person name="Li H."/>
            <person name="Huang H."/>
            <person name="Zhang F."/>
            <person name="Xu H."/>
            <person name="Li N."/>
            <person name="Zhao C."/>
            <person name="Li S."/>
            <person name="Dong L."/>
            <person name="Huang Y."/>
            <person name="Li L."/>
            <person name="Xi Y."/>
            <person name="Qi Q."/>
            <person name="Li W."/>
            <person name="Zhang B."/>
            <person name="Hu W."/>
            <person name="Zhang Y."/>
            <person name="Tian X."/>
            <person name="Jiao Y."/>
            <person name="Liang X."/>
            <person name="Jin J."/>
            <person name="Gao L."/>
            <person name="Zheng W."/>
            <person name="Hao B."/>
            <person name="Liu S.-M."/>
            <person name="Wang W."/>
            <person name="Yuan L."/>
            <person name="Cao M."/>
            <person name="McDermott J."/>
            <person name="Samudrala R."/>
            <person name="Wang J."/>
            <person name="Wong G.K.-S."/>
            <person name="Yang H."/>
        </authorList>
    </citation>
    <scope>NUCLEOTIDE SEQUENCE [LARGE SCALE GENOMIC DNA]</scope>
    <source>
        <strain>cv. Nipponbare</strain>
    </source>
</reference>
<reference key="6">
    <citation type="journal article" date="2003" name="Science">
        <title>Collection, mapping, and annotation of over 28,000 cDNA clones from japonica rice.</title>
        <authorList>
            <consortium name="The rice full-length cDNA consortium"/>
        </authorList>
    </citation>
    <scope>NUCLEOTIDE SEQUENCE [LARGE SCALE MRNA] OF 23-884</scope>
    <source>
        <strain>cv. Nipponbare</strain>
    </source>
</reference>
<reference key="7">
    <citation type="journal article" date="2009" name="Proc. Natl. Acad. Sci. U.S.A.">
        <title>A homolog of human ski-interacting protein in rice positively regulates cell viability and stress tolerance.</title>
        <authorList>
            <person name="Hou X."/>
            <person name="Xie K."/>
            <person name="Yao J."/>
            <person name="Qi Z."/>
            <person name="Xiong L."/>
        </authorList>
    </citation>
    <scope>INTERACTION WITH SKIPA</scope>
</reference>
<reference key="8">
    <citation type="journal article" date="2015" name="Plant Physiol.">
        <title>Histone H2B monoubiquitination mediated by HISTONE MONOUBIQUITINATION1 and HISTONE MONOUBIQUITINATION2 is involved in anther development by regulating tapetum degradation-related genes in rice.</title>
        <authorList>
            <person name="Cao H."/>
            <person name="Li X."/>
            <person name="Wang Z."/>
            <person name="Ding M."/>
            <person name="Sun Y."/>
            <person name="Dong F."/>
            <person name="Chen F."/>
            <person name="Liu L."/>
            <person name="Doughty J."/>
            <person name="Li Y."/>
            <person name="Liu Y.X."/>
        </authorList>
    </citation>
    <scope>FUNCTION</scope>
    <scope>CATALYTIC ACTIVITY</scope>
    <scope>INTERACTION WITH HUB2</scope>
    <scope>SUBCELLULAR LOCATION</scope>
    <scope>DISRUPTION PHENOTYPE</scope>
</reference>
<keyword id="KW-0156">Chromatin regulator</keyword>
<keyword id="KW-0175">Coiled coil</keyword>
<keyword id="KW-0287">Flowering</keyword>
<keyword id="KW-0479">Metal-binding</keyword>
<keyword id="KW-0539">Nucleus</keyword>
<keyword id="KW-1185">Reference proteome</keyword>
<keyword id="KW-0808">Transferase</keyword>
<keyword id="KW-0833">Ubl conjugation pathway</keyword>
<keyword id="KW-0862">Zinc</keyword>
<keyword id="KW-0863">Zinc-finger</keyword>
<name>BRE1A_ORYSJ</name>
<comment type="function">
    <text evidence="6">E3 ubiquitin-protein ligase that monoubiquitinates H2B to form H2BK143ub1. H2BK143ub1 gives a specific tag for epigenetic transcriptional activation and is a prerequisite for H3 Lys-4 methylation (H3K4me). It thereby plays a central role in histone code and gene regulation. H2B monoubiquitination (H2BK143ub1), mediated by HUB1, modulates transcriptional regulation of anther development, likely by promoting histone H3K4 dimethylation (H3K4me2) in the chromatin of the key tapetum degradation-related genes C4, CP1 and UDT1.</text>
</comment>
<comment type="catalytic activity">
    <reaction evidence="6">
        <text>S-ubiquitinyl-[E2 ubiquitin-conjugating enzyme]-L-cysteine + [acceptor protein]-L-lysine = [E2 ubiquitin-conjugating enzyme]-L-cysteine + N(6)-ubiquitinyl-[acceptor protein]-L-lysine.</text>
        <dbReference type="EC" id="2.3.2.27"/>
    </reaction>
</comment>
<comment type="pathway">
    <text evidence="8">Protein modification; protein ubiquitination.</text>
</comment>
<comment type="subunit">
    <text evidence="5 6">Interacts with SKIPA (PubMed:19339499). Interacts with HUB2 (PubMed:26143250).</text>
</comment>
<comment type="subcellular location">
    <subcellularLocation>
        <location evidence="6">Nucleus</location>
    </subcellularLocation>
</comment>
<comment type="domain">
    <text evidence="1">The RING-type zinc finger domain mediates binding to an E2 ubiquitin-conjugating enzyme.</text>
</comment>
<comment type="disruption phenotype">
    <text evidence="6">Semi-dwarf plants, early heading, and partial sterility of spikelets due to defects in the anther developmental program and pollen formation.</text>
</comment>
<comment type="similarity">
    <text evidence="8">Belongs to the BRE1 family.</text>
</comment>
<comment type="sequence caution" evidence="8">
    <conflict type="miscellaneous discrepancy">
        <sequence resource="EMBL" id="AK067475"/>
    </conflict>
    <text>Due to a cryptic acceptor splice site.</text>
</comment>
<comment type="sequence caution" evidence="8">
    <conflict type="erroneous gene model prediction">
        <sequence resource="EMBL-CDS" id="BAF15403"/>
    </conflict>
</comment>
<comment type="sequence caution" evidence="8">
    <conflict type="erroneous gene model prediction">
        <sequence resource="EMBL-CDS" id="BAS90372"/>
    </conflict>
</comment>
<comment type="sequence caution" evidence="8">
    <conflict type="erroneous gene model prediction">
        <sequence resource="EMBL-CDS" id="CAD41603"/>
    </conflict>
</comment>
<sequence length="884" mass="100373">MGSTGEPDRKRRLSSSVAPGGGAPVSPAKRLAVAPTSEDKKLDFTVLKYKNQKLSEQLEAHKFEYRALENKFAGLKEKQRTHNETLSLVNSSWEQLVADLKSRSFCKSGSPNSSPGSGHNNVQKDGTCAPIERDTLRSLVESGATESSGCLPGCHLGSDAPPLHLSTANALGDIFFPSSDLLQANEECALAALTKLPENDRSKQLQSTSSNLLSSLNNVVQALSNLQLKHKQLAEDYQNQRDSSARKRAEHRRLKEELASAASELEETNYKLAALKAQRDNTQGARIPYPTLGNKNMPEDKVRDKQREMQDLEATHKELSELISKRLVEIKRLHEERIEILNKIATFQNILMDFKSIRSSKAFQLVNDRLQKSQAELDHYQTLLEKLQVDKDKFVWQERQFNLKVDLAEIPERVSTYCESSIADLKKDIQKLCDEKNMLILKLEEASREPGRNQVITKFKALVSSIPREMGAMQSEMTKHKEASLELNSLRAEVHSLSRILSRKERDNEEASCRSARAGSDITQLQSVISDLKQTNKELKLFADMYKRESTDSREIMESRDREFLEWAHVHALKSSLDESKLEQRVKAANEAEAITQQRLATAEAEIAESGQKLGTSRKDLVSLSHMLKSKQEECEAYRVEVECIGQAYEDIQAQNQQLLQQIIERDDDNTKIFMEGVKAKQTQDALHLETYSLRRNLQQESSLMDLYNQKIVSLEDQLKMWSDRVGKLQEDGWQQSVSLSNYQRKLVDVHRDAQKLMQSLDGIQANVGSSRLEVADLLIELEKERFSKKRIEDDLEVMSRKASSLRAKARESAVLEKLRHEVKEYRGILKCGICHDRQKEVVITKCYHLFCNQCIQKSLGNRQRRCPSCSLSFGANDVKPIYI</sequence>
<evidence type="ECO:0000250" key="1"/>
<evidence type="ECO:0000255" key="2"/>
<evidence type="ECO:0000255" key="3">
    <source>
        <dbReference type="PROSITE-ProRule" id="PRU00175"/>
    </source>
</evidence>
<evidence type="ECO:0000256" key="4">
    <source>
        <dbReference type="SAM" id="MobiDB-lite"/>
    </source>
</evidence>
<evidence type="ECO:0000269" key="5">
    <source>
    </source>
</evidence>
<evidence type="ECO:0000269" key="6">
    <source>
    </source>
</evidence>
<evidence type="ECO:0000303" key="7">
    <source>
    </source>
</evidence>
<evidence type="ECO:0000305" key="8"/>
<evidence type="ECO:0000312" key="9">
    <source>
        <dbReference type="EMBL" id="BAS90372.1"/>
    </source>
</evidence>
<evidence type="ECO:0000312" key="10">
    <source>
        <dbReference type="EMBL" id="CAD41603.3"/>
    </source>
</evidence>
<evidence type="ECO:0000312" key="11">
    <source>
        <dbReference type="EMBL" id="EEE61450.1"/>
    </source>
</evidence>
<organism>
    <name type="scientific">Oryza sativa subsp. japonica</name>
    <name type="common">Rice</name>
    <dbReference type="NCBI Taxonomy" id="39947"/>
    <lineage>
        <taxon>Eukaryota</taxon>
        <taxon>Viridiplantae</taxon>
        <taxon>Streptophyta</taxon>
        <taxon>Embryophyta</taxon>
        <taxon>Tracheophyta</taxon>
        <taxon>Spermatophyta</taxon>
        <taxon>Magnoliopsida</taxon>
        <taxon>Liliopsida</taxon>
        <taxon>Poales</taxon>
        <taxon>Poaceae</taxon>
        <taxon>BOP clade</taxon>
        <taxon>Oryzoideae</taxon>
        <taxon>Oryzeae</taxon>
        <taxon>Oryzinae</taxon>
        <taxon>Oryza</taxon>
        <taxon>Oryza sativa</taxon>
    </lineage>
</organism>
<accession>Q7XU27</accession>
<accession>A0A0P0WDG3</accession>
<accession>B9FGG6</accession>
<accession>Q0JB84</accession>
<dbReference type="EC" id="2.3.2.27" evidence="6"/>
<dbReference type="EMBL" id="AL663000">
    <property type="protein sequence ID" value="CAD41603.3"/>
    <property type="status" value="ALT_SEQ"/>
    <property type="molecule type" value="Genomic_DNA"/>
</dbReference>
<dbReference type="EMBL" id="AP008210">
    <property type="protein sequence ID" value="BAF15403.1"/>
    <property type="status" value="ALT_SEQ"/>
    <property type="molecule type" value="Genomic_DNA"/>
</dbReference>
<dbReference type="EMBL" id="AP014960">
    <property type="protein sequence ID" value="BAS90372.1"/>
    <property type="status" value="ALT_SEQ"/>
    <property type="molecule type" value="Genomic_DNA"/>
</dbReference>
<dbReference type="EMBL" id="CM000141">
    <property type="protein sequence ID" value="EEE61450.1"/>
    <property type="molecule type" value="Genomic_DNA"/>
</dbReference>
<dbReference type="EMBL" id="AK067475">
    <property type="status" value="NOT_ANNOTATED_CDS"/>
    <property type="molecule type" value="mRNA"/>
</dbReference>
<dbReference type="RefSeq" id="XP_015636384.1">
    <property type="nucleotide sequence ID" value="XM_015780898.1"/>
</dbReference>
<dbReference type="SMR" id="Q7XU27"/>
<dbReference type="BioGRID" id="805626">
    <property type="interactions" value="1"/>
</dbReference>
<dbReference type="FunCoup" id="Q7XU27">
    <property type="interactions" value="3074"/>
</dbReference>
<dbReference type="STRING" id="39947.Q7XU27"/>
<dbReference type="PaxDb" id="39947-Q7XU27"/>
<dbReference type="EnsemblPlants" id="Os04t0550400-01">
    <property type="protein sequence ID" value="Os04t0550400-01"/>
    <property type="gene ID" value="Os04g0550400"/>
</dbReference>
<dbReference type="Gramene" id="Os04t0550400-01">
    <property type="protein sequence ID" value="Os04t0550400-01"/>
    <property type="gene ID" value="Os04g0550400"/>
</dbReference>
<dbReference type="KEGG" id="dosa:Os04g0550400"/>
<dbReference type="eggNOG" id="KOG0978">
    <property type="taxonomic scope" value="Eukaryota"/>
</dbReference>
<dbReference type="HOGENOM" id="CLU_002640_1_1_1"/>
<dbReference type="InParanoid" id="Q7XU27"/>
<dbReference type="OrthoDB" id="10266039at2759"/>
<dbReference type="UniPathway" id="UPA00143"/>
<dbReference type="Proteomes" id="UP000000763">
    <property type="component" value="Chromosome 4"/>
</dbReference>
<dbReference type="Proteomes" id="UP000007752">
    <property type="component" value="Chromosome 4"/>
</dbReference>
<dbReference type="Proteomes" id="UP000059680">
    <property type="component" value="Chromosome 4"/>
</dbReference>
<dbReference type="GO" id="GO:0033503">
    <property type="term" value="C:HULC complex"/>
    <property type="evidence" value="ECO:0000318"/>
    <property type="project" value="GO_Central"/>
</dbReference>
<dbReference type="GO" id="GO:0005634">
    <property type="term" value="C:nucleus"/>
    <property type="evidence" value="ECO:0000318"/>
    <property type="project" value="GO_Central"/>
</dbReference>
<dbReference type="GO" id="GO:0042803">
    <property type="term" value="F:protein homodimerization activity"/>
    <property type="evidence" value="ECO:0007669"/>
    <property type="project" value="EnsemblPlants"/>
</dbReference>
<dbReference type="GO" id="GO:0061630">
    <property type="term" value="F:ubiquitin protein ligase activity"/>
    <property type="evidence" value="ECO:0000318"/>
    <property type="project" value="GO_Central"/>
</dbReference>
<dbReference type="GO" id="GO:0008270">
    <property type="term" value="F:zinc ion binding"/>
    <property type="evidence" value="ECO:0007669"/>
    <property type="project" value="UniProtKB-KW"/>
</dbReference>
<dbReference type="GO" id="GO:0051301">
    <property type="term" value="P:cell division"/>
    <property type="evidence" value="ECO:0007669"/>
    <property type="project" value="EnsemblPlants"/>
</dbReference>
<dbReference type="GO" id="GO:0006325">
    <property type="term" value="P:chromatin organization"/>
    <property type="evidence" value="ECO:0007669"/>
    <property type="project" value="UniProtKB-KW"/>
</dbReference>
<dbReference type="GO" id="GO:0050832">
    <property type="term" value="P:defense response to fungus"/>
    <property type="evidence" value="ECO:0007669"/>
    <property type="project" value="EnsemblPlants"/>
</dbReference>
<dbReference type="GO" id="GO:0009908">
    <property type="term" value="P:flower development"/>
    <property type="evidence" value="ECO:0007669"/>
    <property type="project" value="UniProtKB-KW"/>
</dbReference>
<dbReference type="GO" id="GO:0045087">
    <property type="term" value="P:innate immune response"/>
    <property type="evidence" value="ECO:0007669"/>
    <property type="project" value="EnsemblPlants"/>
</dbReference>
<dbReference type="GO" id="GO:0009965">
    <property type="term" value="P:leaf morphogenesis"/>
    <property type="evidence" value="ECO:0007669"/>
    <property type="project" value="EnsemblPlants"/>
</dbReference>
<dbReference type="GO" id="GO:0051781">
    <property type="term" value="P:positive regulation of cell division"/>
    <property type="evidence" value="ECO:0007669"/>
    <property type="project" value="EnsemblPlants"/>
</dbReference>
<dbReference type="GO" id="GO:0006513">
    <property type="term" value="P:protein monoubiquitination"/>
    <property type="evidence" value="ECO:0007669"/>
    <property type="project" value="EnsemblPlants"/>
</dbReference>
<dbReference type="GO" id="GO:0010389">
    <property type="term" value="P:regulation of G2/M transition of mitotic cell cycle"/>
    <property type="evidence" value="ECO:0007669"/>
    <property type="project" value="EnsemblPlants"/>
</dbReference>
<dbReference type="GO" id="GO:0010162">
    <property type="term" value="P:seed dormancy process"/>
    <property type="evidence" value="ECO:0007669"/>
    <property type="project" value="EnsemblPlants"/>
</dbReference>
<dbReference type="GO" id="GO:0010228">
    <property type="term" value="P:vegetative to reproductive phase transition of meristem"/>
    <property type="evidence" value="ECO:0007669"/>
    <property type="project" value="EnsemblPlants"/>
</dbReference>
<dbReference type="CDD" id="cd16499">
    <property type="entry name" value="RING-HC_Bre1-like"/>
    <property type="match status" value="1"/>
</dbReference>
<dbReference type="Gene3D" id="3.30.40.10">
    <property type="entry name" value="Zinc/RING finger domain, C3HC4 (zinc finger)"/>
    <property type="match status" value="1"/>
</dbReference>
<dbReference type="InterPro" id="IPR013956">
    <property type="entry name" value="E3_ubiquit_lig_Bre1"/>
</dbReference>
<dbReference type="InterPro" id="IPR001841">
    <property type="entry name" value="Znf_RING"/>
</dbReference>
<dbReference type="InterPro" id="IPR013083">
    <property type="entry name" value="Znf_RING/FYVE/PHD"/>
</dbReference>
<dbReference type="InterPro" id="IPR017907">
    <property type="entry name" value="Znf_RING_CS"/>
</dbReference>
<dbReference type="PANTHER" id="PTHR23163:SF0">
    <property type="entry name" value="E3 UBIQUITIN-PROTEIN LIGASE BRE1"/>
    <property type="match status" value="1"/>
</dbReference>
<dbReference type="PANTHER" id="PTHR23163">
    <property type="entry name" value="RING FINGER PROTEIN-RELATED"/>
    <property type="match status" value="1"/>
</dbReference>
<dbReference type="Pfam" id="PF13923">
    <property type="entry name" value="zf-C3HC4_2"/>
    <property type="match status" value="1"/>
</dbReference>
<dbReference type="SMART" id="SM00184">
    <property type="entry name" value="RING"/>
    <property type="match status" value="1"/>
</dbReference>
<dbReference type="SUPFAM" id="SSF57850">
    <property type="entry name" value="RING/U-box"/>
    <property type="match status" value="1"/>
</dbReference>
<dbReference type="SUPFAM" id="SSF57997">
    <property type="entry name" value="Tropomyosin"/>
    <property type="match status" value="1"/>
</dbReference>
<dbReference type="PROSITE" id="PS00518">
    <property type="entry name" value="ZF_RING_1"/>
    <property type="match status" value="1"/>
</dbReference>
<dbReference type="PROSITE" id="PS50089">
    <property type="entry name" value="ZF_RING_2"/>
    <property type="match status" value="1"/>
</dbReference>